<accession>Q86AS6</accession>
<accession>Q554M0</accession>
<name>SYHC_DICDI</name>
<organism>
    <name type="scientific">Dictyostelium discoideum</name>
    <name type="common">Social amoeba</name>
    <dbReference type="NCBI Taxonomy" id="44689"/>
    <lineage>
        <taxon>Eukaryota</taxon>
        <taxon>Amoebozoa</taxon>
        <taxon>Evosea</taxon>
        <taxon>Eumycetozoa</taxon>
        <taxon>Dictyostelia</taxon>
        <taxon>Dictyosteliales</taxon>
        <taxon>Dictyosteliaceae</taxon>
        <taxon>Dictyostelium</taxon>
    </lineage>
</organism>
<feature type="chain" id="PRO_0000341687" description="Histidine--tRNA ligase, cytoplasmic">
    <location>
        <begin position="1"/>
        <end position="481"/>
    </location>
</feature>
<feature type="region of interest" description="Disordered" evidence="2">
    <location>
        <begin position="1"/>
        <end position="48"/>
    </location>
</feature>
<feature type="compositionally biased region" description="Basic and acidic residues" evidence="2">
    <location>
        <begin position="12"/>
        <end position="31"/>
    </location>
</feature>
<sequence>MSEPVVDNVTNKVEKMEVKEKTSAPPKEKKEKKSNKVQLKTPKGTQDYNPRQMTIREQVFDGIKQVFKRHGAVTIETPVFELKETLTGKYGEDSKLIYDLQDQGGEICSLRYDLTVPFARYVAMNGVLNIKRYHIARVYRRDNPIMTKGRFREFYQCDFDIAGTYDLMVPDAECLVMICEILEQVKVGDFQIKLNHRKLLDAIFAICGVPADKFRAICSAVDKLDKSPWEEVRKEMVEVKALDGAVADKIEKFVSLKDEPIKLLQHLRATGMCDGNKDATEALSQLETLFGYLECFGVTQHILFDLSLARGLDYYTGIIYEAVLTGQDRVGSIAAGGRYDGLVGMYGKKDVPAVGFSIGIERIFTILEDEYKKENKKIRENATQVFVVQMEKDLIKERLAIVSELWKAGINAEFSYKVNPKLPAQLNTADESNIPLIIIIGKSEVETNSLSVKTMHDRKQVSIERSNFTVKIKEILSTIPK</sequence>
<reference key="1">
    <citation type="journal article" date="2002" name="Nature">
        <title>Sequence and analysis of chromosome 2 of Dictyostelium discoideum.</title>
        <authorList>
            <person name="Gloeckner G."/>
            <person name="Eichinger L."/>
            <person name="Szafranski K."/>
            <person name="Pachebat J.A."/>
            <person name="Bankier A.T."/>
            <person name="Dear P.H."/>
            <person name="Lehmann R."/>
            <person name="Baumgart C."/>
            <person name="Parra G."/>
            <person name="Abril J.F."/>
            <person name="Guigo R."/>
            <person name="Kumpf K."/>
            <person name="Tunggal B."/>
            <person name="Cox E.C."/>
            <person name="Quail M.A."/>
            <person name="Platzer M."/>
            <person name="Rosenthal A."/>
            <person name="Noegel A.A."/>
        </authorList>
    </citation>
    <scope>NUCLEOTIDE SEQUENCE [LARGE SCALE GENOMIC DNA]</scope>
    <source>
        <strain>AX4</strain>
    </source>
</reference>
<reference key="2">
    <citation type="journal article" date="2005" name="Nature">
        <title>The genome of the social amoeba Dictyostelium discoideum.</title>
        <authorList>
            <person name="Eichinger L."/>
            <person name="Pachebat J.A."/>
            <person name="Gloeckner G."/>
            <person name="Rajandream M.A."/>
            <person name="Sucgang R."/>
            <person name="Berriman M."/>
            <person name="Song J."/>
            <person name="Olsen R."/>
            <person name="Szafranski K."/>
            <person name="Xu Q."/>
            <person name="Tunggal B."/>
            <person name="Kummerfeld S."/>
            <person name="Madera M."/>
            <person name="Konfortov B.A."/>
            <person name="Rivero F."/>
            <person name="Bankier A.T."/>
            <person name="Lehmann R."/>
            <person name="Hamlin N."/>
            <person name="Davies R."/>
            <person name="Gaudet P."/>
            <person name="Fey P."/>
            <person name="Pilcher K."/>
            <person name="Chen G."/>
            <person name="Saunders D."/>
            <person name="Sodergren E.J."/>
            <person name="Davis P."/>
            <person name="Kerhornou A."/>
            <person name="Nie X."/>
            <person name="Hall N."/>
            <person name="Anjard C."/>
            <person name="Hemphill L."/>
            <person name="Bason N."/>
            <person name="Farbrother P."/>
            <person name="Desany B."/>
            <person name="Just E."/>
            <person name="Morio T."/>
            <person name="Rost R."/>
            <person name="Churcher C.M."/>
            <person name="Cooper J."/>
            <person name="Haydock S."/>
            <person name="van Driessche N."/>
            <person name="Cronin A."/>
            <person name="Goodhead I."/>
            <person name="Muzny D.M."/>
            <person name="Mourier T."/>
            <person name="Pain A."/>
            <person name="Lu M."/>
            <person name="Harper D."/>
            <person name="Lindsay R."/>
            <person name="Hauser H."/>
            <person name="James K.D."/>
            <person name="Quiles M."/>
            <person name="Madan Babu M."/>
            <person name="Saito T."/>
            <person name="Buchrieser C."/>
            <person name="Wardroper A."/>
            <person name="Felder M."/>
            <person name="Thangavelu M."/>
            <person name="Johnson D."/>
            <person name="Knights A."/>
            <person name="Loulseged H."/>
            <person name="Mungall K.L."/>
            <person name="Oliver K."/>
            <person name="Price C."/>
            <person name="Quail M.A."/>
            <person name="Urushihara H."/>
            <person name="Hernandez J."/>
            <person name="Rabbinowitsch E."/>
            <person name="Steffen D."/>
            <person name="Sanders M."/>
            <person name="Ma J."/>
            <person name="Kohara Y."/>
            <person name="Sharp S."/>
            <person name="Simmonds M.N."/>
            <person name="Spiegler S."/>
            <person name="Tivey A."/>
            <person name="Sugano S."/>
            <person name="White B."/>
            <person name="Walker D."/>
            <person name="Woodward J.R."/>
            <person name="Winckler T."/>
            <person name="Tanaka Y."/>
            <person name="Shaulsky G."/>
            <person name="Schleicher M."/>
            <person name="Weinstock G.M."/>
            <person name="Rosenthal A."/>
            <person name="Cox E.C."/>
            <person name="Chisholm R.L."/>
            <person name="Gibbs R.A."/>
            <person name="Loomis W.F."/>
            <person name="Platzer M."/>
            <person name="Kay R.R."/>
            <person name="Williams J.G."/>
            <person name="Dear P.H."/>
            <person name="Noegel A.A."/>
            <person name="Barrell B.G."/>
            <person name="Kuspa A."/>
        </authorList>
    </citation>
    <scope>NUCLEOTIDE SEQUENCE [LARGE SCALE GENOMIC DNA]</scope>
    <source>
        <strain>AX4</strain>
    </source>
</reference>
<protein>
    <recommendedName>
        <fullName>Histidine--tRNA ligase, cytoplasmic</fullName>
        <ecNumber>6.1.1.21</ecNumber>
    </recommendedName>
    <alternativeName>
        <fullName>Histidyl-tRNA synthetase</fullName>
        <shortName>HisRS</shortName>
    </alternativeName>
</protein>
<evidence type="ECO:0000250" key="1"/>
<evidence type="ECO:0000256" key="2">
    <source>
        <dbReference type="SAM" id="MobiDB-lite"/>
    </source>
</evidence>
<evidence type="ECO:0000305" key="3"/>
<proteinExistence type="inferred from homology"/>
<keyword id="KW-0030">Aminoacyl-tRNA synthetase</keyword>
<keyword id="KW-0067">ATP-binding</keyword>
<keyword id="KW-0963">Cytoplasm</keyword>
<keyword id="KW-0436">Ligase</keyword>
<keyword id="KW-0547">Nucleotide-binding</keyword>
<keyword id="KW-0648">Protein biosynthesis</keyword>
<keyword id="KW-1185">Reference proteome</keyword>
<dbReference type="EC" id="6.1.1.21"/>
<dbReference type="EMBL" id="AAFI02000012">
    <property type="protein sequence ID" value="EAL69972.1"/>
    <property type="molecule type" value="Genomic_DNA"/>
</dbReference>
<dbReference type="RefSeq" id="XP_644303.1">
    <property type="nucleotide sequence ID" value="XM_639211.1"/>
</dbReference>
<dbReference type="SMR" id="Q86AS6"/>
<dbReference type="FunCoup" id="Q86AS6">
    <property type="interactions" value="1073"/>
</dbReference>
<dbReference type="STRING" id="44689.Q86AS6"/>
<dbReference type="PaxDb" id="44689-DDB0231332"/>
<dbReference type="EnsemblProtists" id="EAL69972">
    <property type="protein sequence ID" value="EAL69972"/>
    <property type="gene ID" value="DDB_G0274159"/>
</dbReference>
<dbReference type="GeneID" id="8619731"/>
<dbReference type="KEGG" id="ddi:DDB_G0274159"/>
<dbReference type="dictyBase" id="DDB_G0274159">
    <property type="gene designation" value="hisS"/>
</dbReference>
<dbReference type="VEuPathDB" id="AmoebaDB:DDB_G0274159"/>
<dbReference type="eggNOG" id="KOG1936">
    <property type="taxonomic scope" value="Eukaryota"/>
</dbReference>
<dbReference type="HOGENOM" id="CLU_025113_4_2_1"/>
<dbReference type="InParanoid" id="Q86AS6"/>
<dbReference type="OMA" id="YQIQKVW"/>
<dbReference type="PhylomeDB" id="Q86AS6"/>
<dbReference type="PRO" id="PR:Q86AS6"/>
<dbReference type="Proteomes" id="UP000002195">
    <property type="component" value="Chromosome 2"/>
</dbReference>
<dbReference type="GO" id="GO:0005829">
    <property type="term" value="C:cytosol"/>
    <property type="evidence" value="ECO:0000318"/>
    <property type="project" value="GO_Central"/>
</dbReference>
<dbReference type="GO" id="GO:0005739">
    <property type="term" value="C:mitochondrion"/>
    <property type="evidence" value="ECO:0000318"/>
    <property type="project" value="GO_Central"/>
</dbReference>
<dbReference type="GO" id="GO:0005524">
    <property type="term" value="F:ATP binding"/>
    <property type="evidence" value="ECO:0007669"/>
    <property type="project" value="UniProtKB-KW"/>
</dbReference>
<dbReference type="GO" id="GO:0004821">
    <property type="term" value="F:histidine-tRNA ligase activity"/>
    <property type="evidence" value="ECO:0000318"/>
    <property type="project" value="GO_Central"/>
</dbReference>
<dbReference type="GO" id="GO:0003723">
    <property type="term" value="F:RNA binding"/>
    <property type="evidence" value="ECO:0000318"/>
    <property type="project" value="GO_Central"/>
</dbReference>
<dbReference type="GO" id="GO:0006427">
    <property type="term" value="P:histidyl-tRNA aminoacylation"/>
    <property type="evidence" value="ECO:0000250"/>
    <property type="project" value="dictyBase"/>
</dbReference>
<dbReference type="GO" id="GO:0032543">
    <property type="term" value="P:mitochondrial translation"/>
    <property type="evidence" value="ECO:0000318"/>
    <property type="project" value="GO_Central"/>
</dbReference>
<dbReference type="CDD" id="cd00773">
    <property type="entry name" value="HisRS-like_core"/>
    <property type="match status" value="1"/>
</dbReference>
<dbReference type="CDD" id="cd00859">
    <property type="entry name" value="HisRS_anticodon"/>
    <property type="match status" value="1"/>
</dbReference>
<dbReference type="FunFam" id="3.40.50.800:FF:000015">
    <property type="entry name" value="Histidyl-tRNA synthetase, mitochondrial"/>
    <property type="match status" value="1"/>
</dbReference>
<dbReference type="FunFam" id="3.30.930.10:FF:000021">
    <property type="entry name" value="Probable histidine--tRNA ligase, mitochondrial"/>
    <property type="match status" value="1"/>
</dbReference>
<dbReference type="Gene3D" id="3.40.50.800">
    <property type="entry name" value="Anticodon-binding domain"/>
    <property type="match status" value="1"/>
</dbReference>
<dbReference type="Gene3D" id="3.30.930.10">
    <property type="entry name" value="Bira Bifunctional Protein, Domain 2"/>
    <property type="match status" value="1"/>
</dbReference>
<dbReference type="HAMAP" id="MF_00127">
    <property type="entry name" value="His_tRNA_synth"/>
    <property type="match status" value="1"/>
</dbReference>
<dbReference type="InterPro" id="IPR006195">
    <property type="entry name" value="aa-tRNA-synth_II"/>
</dbReference>
<dbReference type="InterPro" id="IPR045864">
    <property type="entry name" value="aa-tRNA-synth_II/BPL/LPL"/>
</dbReference>
<dbReference type="InterPro" id="IPR004154">
    <property type="entry name" value="Anticodon-bd"/>
</dbReference>
<dbReference type="InterPro" id="IPR036621">
    <property type="entry name" value="Anticodon-bd_dom_sf"/>
</dbReference>
<dbReference type="InterPro" id="IPR015807">
    <property type="entry name" value="His-tRNA-ligase"/>
</dbReference>
<dbReference type="InterPro" id="IPR041715">
    <property type="entry name" value="HisRS-like_core"/>
</dbReference>
<dbReference type="InterPro" id="IPR004516">
    <property type="entry name" value="HisRS/HisZ"/>
</dbReference>
<dbReference type="InterPro" id="IPR033656">
    <property type="entry name" value="HisRS_anticodon"/>
</dbReference>
<dbReference type="NCBIfam" id="TIGR00442">
    <property type="entry name" value="hisS"/>
    <property type="match status" value="1"/>
</dbReference>
<dbReference type="PANTHER" id="PTHR11476:SF7">
    <property type="entry name" value="HISTIDINE--TRNA LIGASE"/>
    <property type="match status" value="1"/>
</dbReference>
<dbReference type="PANTHER" id="PTHR11476">
    <property type="entry name" value="HISTIDYL-TRNA SYNTHETASE"/>
    <property type="match status" value="1"/>
</dbReference>
<dbReference type="Pfam" id="PF03129">
    <property type="entry name" value="HGTP_anticodon"/>
    <property type="match status" value="1"/>
</dbReference>
<dbReference type="Pfam" id="PF13393">
    <property type="entry name" value="tRNA-synt_His"/>
    <property type="match status" value="1"/>
</dbReference>
<dbReference type="PIRSF" id="PIRSF001549">
    <property type="entry name" value="His-tRNA_synth"/>
    <property type="match status" value="1"/>
</dbReference>
<dbReference type="SUPFAM" id="SSF52954">
    <property type="entry name" value="Class II aaRS ABD-related"/>
    <property type="match status" value="1"/>
</dbReference>
<dbReference type="SUPFAM" id="SSF55681">
    <property type="entry name" value="Class II aaRS and biotin synthetases"/>
    <property type="match status" value="1"/>
</dbReference>
<dbReference type="PROSITE" id="PS50862">
    <property type="entry name" value="AA_TRNA_LIGASE_II"/>
    <property type="match status" value="1"/>
</dbReference>
<gene>
    <name type="primary">hisS</name>
    <name type="ORF">DDB_G0274159</name>
</gene>
<comment type="catalytic activity">
    <reaction>
        <text>tRNA(His) + L-histidine + ATP = L-histidyl-tRNA(His) + AMP + diphosphate + H(+)</text>
        <dbReference type="Rhea" id="RHEA:17313"/>
        <dbReference type="Rhea" id="RHEA-COMP:9665"/>
        <dbReference type="Rhea" id="RHEA-COMP:9689"/>
        <dbReference type="ChEBI" id="CHEBI:15378"/>
        <dbReference type="ChEBI" id="CHEBI:30616"/>
        <dbReference type="ChEBI" id="CHEBI:33019"/>
        <dbReference type="ChEBI" id="CHEBI:57595"/>
        <dbReference type="ChEBI" id="CHEBI:78442"/>
        <dbReference type="ChEBI" id="CHEBI:78527"/>
        <dbReference type="ChEBI" id="CHEBI:456215"/>
        <dbReference type="EC" id="6.1.1.21"/>
    </reaction>
</comment>
<comment type="subcellular location">
    <subcellularLocation>
        <location evidence="1">Cytoplasm</location>
    </subcellularLocation>
</comment>
<comment type="similarity">
    <text evidence="3">Belongs to the class-II aminoacyl-tRNA synthetase family.</text>
</comment>